<proteinExistence type="inferred from homology"/>
<name>EFG_CLOB1</name>
<reference key="1">
    <citation type="journal article" date="2007" name="PLoS ONE">
        <title>Analysis of the neurotoxin complex genes in Clostridium botulinum A1-A4 and B1 strains: BoNT/A3, /Ba4 and /B1 clusters are located within plasmids.</title>
        <authorList>
            <person name="Smith T.J."/>
            <person name="Hill K.K."/>
            <person name="Foley B.T."/>
            <person name="Detter J.C."/>
            <person name="Munk A.C."/>
            <person name="Bruce D.C."/>
            <person name="Doggett N.A."/>
            <person name="Smith L.A."/>
            <person name="Marks J.D."/>
            <person name="Xie G."/>
            <person name="Brettin T.S."/>
        </authorList>
    </citation>
    <scope>NUCLEOTIDE SEQUENCE [LARGE SCALE GENOMIC DNA]</scope>
    <source>
        <strain>ATCC 19397 / Type A</strain>
    </source>
</reference>
<dbReference type="EMBL" id="CP000726">
    <property type="protein sequence ID" value="ABS35002.1"/>
    <property type="molecule type" value="Genomic_DNA"/>
</dbReference>
<dbReference type="RefSeq" id="WP_003357512.1">
    <property type="nucleotide sequence ID" value="NC_009697.1"/>
</dbReference>
<dbReference type="SMR" id="A7FZ72"/>
<dbReference type="GeneID" id="5187731"/>
<dbReference type="KEGG" id="cba:CLB_3540"/>
<dbReference type="HOGENOM" id="CLU_002794_4_1_9"/>
<dbReference type="GO" id="GO:0005737">
    <property type="term" value="C:cytoplasm"/>
    <property type="evidence" value="ECO:0007669"/>
    <property type="project" value="UniProtKB-SubCell"/>
</dbReference>
<dbReference type="GO" id="GO:0005525">
    <property type="term" value="F:GTP binding"/>
    <property type="evidence" value="ECO:0007669"/>
    <property type="project" value="UniProtKB-UniRule"/>
</dbReference>
<dbReference type="GO" id="GO:0003924">
    <property type="term" value="F:GTPase activity"/>
    <property type="evidence" value="ECO:0007669"/>
    <property type="project" value="InterPro"/>
</dbReference>
<dbReference type="GO" id="GO:0003746">
    <property type="term" value="F:translation elongation factor activity"/>
    <property type="evidence" value="ECO:0007669"/>
    <property type="project" value="UniProtKB-UniRule"/>
</dbReference>
<dbReference type="GO" id="GO:0032790">
    <property type="term" value="P:ribosome disassembly"/>
    <property type="evidence" value="ECO:0007669"/>
    <property type="project" value="TreeGrafter"/>
</dbReference>
<dbReference type="CDD" id="cd01886">
    <property type="entry name" value="EF-G"/>
    <property type="match status" value="1"/>
</dbReference>
<dbReference type="CDD" id="cd16262">
    <property type="entry name" value="EFG_III"/>
    <property type="match status" value="1"/>
</dbReference>
<dbReference type="CDD" id="cd01434">
    <property type="entry name" value="EFG_mtEFG1_IV"/>
    <property type="match status" value="1"/>
</dbReference>
<dbReference type="CDD" id="cd03713">
    <property type="entry name" value="EFG_mtEFG_C"/>
    <property type="match status" value="1"/>
</dbReference>
<dbReference type="CDD" id="cd04088">
    <property type="entry name" value="EFG_mtEFG_II"/>
    <property type="match status" value="1"/>
</dbReference>
<dbReference type="FunFam" id="2.40.30.10:FF:000006">
    <property type="entry name" value="Elongation factor G"/>
    <property type="match status" value="1"/>
</dbReference>
<dbReference type="FunFam" id="3.30.230.10:FF:000003">
    <property type="entry name" value="Elongation factor G"/>
    <property type="match status" value="1"/>
</dbReference>
<dbReference type="FunFam" id="3.30.70.240:FF:000001">
    <property type="entry name" value="Elongation factor G"/>
    <property type="match status" value="1"/>
</dbReference>
<dbReference type="FunFam" id="3.30.70.870:FF:000001">
    <property type="entry name" value="Elongation factor G"/>
    <property type="match status" value="1"/>
</dbReference>
<dbReference type="FunFam" id="3.40.50.300:FF:000029">
    <property type="entry name" value="Elongation factor G"/>
    <property type="match status" value="1"/>
</dbReference>
<dbReference type="Gene3D" id="3.30.230.10">
    <property type="match status" value="1"/>
</dbReference>
<dbReference type="Gene3D" id="3.30.70.240">
    <property type="match status" value="1"/>
</dbReference>
<dbReference type="Gene3D" id="3.30.70.870">
    <property type="entry name" value="Elongation Factor G (Translational Gtpase), domain 3"/>
    <property type="match status" value="1"/>
</dbReference>
<dbReference type="Gene3D" id="3.40.50.300">
    <property type="entry name" value="P-loop containing nucleotide triphosphate hydrolases"/>
    <property type="match status" value="1"/>
</dbReference>
<dbReference type="Gene3D" id="2.40.30.10">
    <property type="entry name" value="Translation factors"/>
    <property type="match status" value="1"/>
</dbReference>
<dbReference type="HAMAP" id="MF_00054_B">
    <property type="entry name" value="EF_G_EF_2_B"/>
    <property type="match status" value="1"/>
</dbReference>
<dbReference type="InterPro" id="IPR053905">
    <property type="entry name" value="EF-G-like_DII"/>
</dbReference>
<dbReference type="InterPro" id="IPR041095">
    <property type="entry name" value="EFG_II"/>
</dbReference>
<dbReference type="InterPro" id="IPR009022">
    <property type="entry name" value="EFG_III"/>
</dbReference>
<dbReference type="InterPro" id="IPR035647">
    <property type="entry name" value="EFG_III/V"/>
</dbReference>
<dbReference type="InterPro" id="IPR047872">
    <property type="entry name" value="EFG_IV"/>
</dbReference>
<dbReference type="InterPro" id="IPR035649">
    <property type="entry name" value="EFG_V"/>
</dbReference>
<dbReference type="InterPro" id="IPR000640">
    <property type="entry name" value="EFG_V-like"/>
</dbReference>
<dbReference type="InterPro" id="IPR031157">
    <property type="entry name" value="G_TR_CS"/>
</dbReference>
<dbReference type="InterPro" id="IPR027417">
    <property type="entry name" value="P-loop_NTPase"/>
</dbReference>
<dbReference type="InterPro" id="IPR020568">
    <property type="entry name" value="Ribosomal_Su5_D2-typ_SF"/>
</dbReference>
<dbReference type="InterPro" id="IPR014721">
    <property type="entry name" value="Ribsml_uS5_D2-typ_fold_subgr"/>
</dbReference>
<dbReference type="InterPro" id="IPR005225">
    <property type="entry name" value="Small_GTP-bd"/>
</dbReference>
<dbReference type="InterPro" id="IPR000795">
    <property type="entry name" value="T_Tr_GTP-bd_dom"/>
</dbReference>
<dbReference type="InterPro" id="IPR009000">
    <property type="entry name" value="Transl_B-barrel_sf"/>
</dbReference>
<dbReference type="InterPro" id="IPR004540">
    <property type="entry name" value="Transl_elong_EFG/EF2"/>
</dbReference>
<dbReference type="InterPro" id="IPR005517">
    <property type="entry name" value="Transl_elong_EFG/EF2_IV"/>
</dbReference>
<dbReference type="NCBIfam" id="TIGR00484">
    <property type="entry name" value="EF-G"/>
    <property type="match status" value="1"/>
</dbReference>
<dbReference type="NCBIfam" id="NF009379">
    <property type="entry name" value="PRK12740.1-3"/>
    <property type="match status" value="1"/>
</dbReference>
<dbReference type="NCBIfam" id="NF009381">
    <property type="entry name" value="PRK12740.1-5"/>
    <property type="match status" value="1"/>
</dbReference>
<dbReference type="NCBIfam" id="TIGR00231">
    <property type="entry name" value="small_GTP"/>
    <property type="match status" value="1"/>
</dbReference>
<dbReference type="PANTHER" id="PTHR43261:SF1">
    <property type="entry name" value="RIBOSOME-RELEASING FACTOR 2, MITOCHONDRIAL"/>
    <property type="match status" value="1"/>
</dbReference>
<dbReference type="PANTHER" id="PTHR43261">
    <property type="entry name" value="TRANSLATION ELONGATION FACTOR G-RELATED"/>
    <property type="match status" value="1"/>
</dbReference>
<dbReference type="Pfam" id="PF22042">
    <property type="entry name" value="EF-G_D2"/>
    <property type="match status" value="1"/>
</dbReference>
<dbReference type="Pfam" id="PF00679">
    <property type="entry name" value="EFG_C"/>
    <property type="match status" value="1"/>
</dbReference>
<dbReference type="Pfam" id="PF14492">
    <property type="entry name" value="EFG_III"/>
    <property type="match status" value="1"/>
</dbReference>
<dbReference type="Pfam" id="PF03764">
    <property type="entry name" value="EFG_IV"/>
    <property type="match status" value="1"/>
</dbReference>
<dbReference type="Pfam" id="PF00009">
    <property type="entry name" value="GTP_EFTU"/>
    <property type="match status" value="1"/>
</dbReference>
<dbReference type="PRINTS" id="PR00315">
    <property type="entry name" value="ELONGATNFCT"/>
</dbReference>
<dbReference type="SMART" id="SM00838">
    <property type="entry name" value="EFG_C"/>
    <property type="match status" value="1"/>
</dbReference>
<dbReference type="SMART" id="SM00889">
    <property type="entry name" value="EFG_IV"/>
    <property type="match status" value="1"/>
</dbReference>
<dbReference type="SUPFAM" id="SSF54980">
    <property type="entry name" value="EF-G C-terminal domain-like"/>
    <property type="match status" value="2"/>
</dbReference>
<dbReference type="SUPFAM" id="SSF52540">
    <property type="entry name" value="P-loop containing nucleoside triphosphate hydrolases"/>
    <property type="match status" value="1"/>
</dbReference>
<dbReference type="SUPFAM" id="SSF54211">
    <property type="entry name" value="Ribosomal protein S5 domain 2-like"/>
    <property type="match status" value="1"/>
</dbReference>
<dbReference type="SUPFAM" id="SSF50447">
    <property type="entry name" value="Translation proteins"/>
    <property type="match status" value="1"/>
</dbReference>
<dbReference type="PROSITE" id="PS00301">
    <property type="entry name" value="G_TR_1"/>
    <property type="match status" value="1"/>
</dbReference>
<dbReference type="PROSITE" id="PS51722">
    <property type="entry name" value="G_TR_2"/>
    <property type="match status" value="1"/>
</dbReference>
<protein>
    <recommendedName>
        <fullName evidence="1">Elongation factor G</fullName>
        <shortName evidence="1">EF-G</shortName>
    </recommendedName>
</protein>
<keyword id="KW-0963">Cytoplasm</keyword>
<keyword id="KW-0251">Elongation factor</keyword>
<keyword id="KW-0342">GTP-binding</keyword>
<keyword id="KW-0547">Nucleotide-binding</keyword>
<keyword id="KW-0648">Protein biosynthesis</keyword>
<evidence type="ECO:0000255" key="1">
    <source>
        <dbReference type="HAMAP-Rule" id="MF_00054"/>
    </source>
</evidence>
<gene>
    <name evidence="1" type="primary">fusA</name>
    <name type="ordered locus">CLB_3540</name>
</gene>
<organism>
    <name type="scientific">Clostridium botulinum (strain ATCC 19397 / Type A)</name>
    <dbReference type="NCBI Taxonomy" id="441770"/>
    <lineage>
        <taxon>Bacteria</taxon>
        <taxon>Bacillati</taxon>
        <taxon>Bacillota</taxon>
        <taxon>Clostridia</taxon>
        <taxon>Eubacteriales</taxon>
        <taxon>Clostridiaceae</taxon>
        <taxon>Clostridium</taxon>
    </lineage>
</organism>
<accession>A7FZ72</accession>
<feature type="chain" id="PRO_0000335839" description="Elongation factor G">
    <location>
        <begin position="1"/>
        <end position="689"/>
    </location>
</feature>
<feature type="domain" description="tr-type G">
    <location>
        <begin position="9"/>
        <end position="283"/>
    </location>
</feature>
<feature type="binding site" evidence="1">
    <location>
        <begin position="18"/>
        <end position="25"/>
    </location>
    <ligand>
        <name>GTP</name>
        <dbReference type="ChEBI" id="CHEBI:37565"/>
    </ligand>
</feature>
<feature type="binding site" evidence="1">
    <location>
        <begin position="82"/>
        <end position="86"/>
    </location>
    <ligand>
        <name>GTP</name>
        <dbReference type="ChEBI" id="CHEBI:37565"/>
    </ligand>
</feature>
<feature type="binding site" evidence="1">
    <location>
        <begin position="136"/>
        <end position="139"/>
    </location>
    <ligand>
        <name>GTP</name>
        <dbReference type="ChEBI" id="CHEBI:37565"/>
    </ligand>
</feature>
<comment type="function">
    <text evidence="1">Catalyzes the GTP-dependent ribosomal translocation step during translation elongation. During this step, the ribosome changes from the pre-translocational (PRE) to the post-translocational (POST) state as the newly formed A-site-bound peptidyl-tRNA and P-site-bound deacylated tRNA move to the P and E sites, respectively. Catalyzes the coordinated movement of the two tRNA molecules, the mRNA and conformational changes in the ribosome.</text>
</comment>
<comment type="subcellular location">
    <subcellularLocation>
        <location evidence="1">Cytoplasm</location>
    </subcellularLocation>
</comment>
<comment type="similarity">
    <text evidence="1">Belongs to the TRAFAC class translation factor GTPase superfamily. Classic translation factor GTPase family. EF-G/EF-2 subfamily.</text>
</comment>
<sequence>MANKEYPLAKFRNIGIMAHIDAGKTTATERILFYTGKTHKIGETHEGAATMDWMEQEQERGITITSAATTCFWKDHQVNIIDTPGHVDFTVEVERSLRVLDGAVTILDAKSGVEPQTETVWRQADNYKVPRMVFINKMDKLGADFLMSVGTLRERLHANAVPLQLPIGAEDSFSGIIDLVKNDAVIYKDDLGTVMDETEIPEDMKEIAEEYRTMLLEAVAEVDEDIMMKYLEGEEISVEEIKTALRKGVLANKIVPVLCGSAYKNKGVQLLLDAIIEFMPSPLDIEDVKGTEPTTGEEMTRPADAKAPLAALAFKIATDPFIGKLAFTRIYSGTMKSGTYVFNSNKGKRERIGRLVKMHANHREDVEELKAGELGAIVGLKDTTTGDTLCDDADPIILENMEFPEPVIDVSIEPKTKAGQEKMGIALAKLAEEDPTFRTYTNQETGQTIIAGMGELHLEIIVDRLIREFKVECNVGQPQVAYKETIKKHVKAEGKFIRQSGGRGQYGHCWIEMMPTEGEYEFQNAVVGGSIPKEYIPAIDNGIQEASQSGIIAGYPVINFKVKLFDGSYHDVDSSEMAFKIAGSMAFKNAMSKADAVLLEPSMKVEVVVPEEYMGDVIGDINSRRGRIEGMTPRAGAEVIRAFVPLSEMFGYATTLRSKTQGRGNYVMQFDHYEEVPKSIQDKVIGERK</sequence>